<accession>P9WJ69</accession>
<accession>F2GK95</accession>
<accession>Q6MWZ6</accession>
<accession>Q8VJ46</accession>
<dbReference type="EMBL" id="AL123456">
    <property type="protein sequence ID" value="CCP46038.1"/>
    <property type="molecule type" value="Genomic_DNA"/>
</dbReference>
<dbReference type="RefSeq" id="YP_177945.1">
    <property type="nucleotide sequence ID" value="NC_000962.3"/>
</dbReference>
<dbReference type="SMR" id="P9WJ69"/>
<dbReference type="FunCoup" id="P9WJ69">
    <property type="interactions" value="2"/>
</dbReference>
<dbReference type="IntAct" id="P9WJ69">
    <property type="interactions" value="2"/>
</dbReference>
<dbReference type="STRING" id="83332.Rv3221A"/>
<dbReference type="iPTMnet" id="P9WJ69"/>
<dbReference type="PaxDb" id="83332-Rv3221A"/>
<dbReference type="DNASU" id="3205091"/>
<dbReference type="GeneID" id="3205091"/>
<dbReference type="KEGG" id="mtu:Rv3221A"/>
<dbReference type="KEGG" id="mtv:RVBD_3221A"/>
<dbReference type="TubercuList" id="Rv3221A"/>
<dbReference type="eggNOG" id="COG5662">
    <property type="taxonomic scope" value="Bacteria"/>
</dbReference>
<dbReference type="InParanoid" id="P9WJ69"/>
<dbReference type="OrthoDB" id="3267840at2"/>
<dbReference type="PhylomeDB" id="P9WJ69"/>
<dbReference type="Proteomes" id="UP000001584">
    <property type="component" value="Chromosome"/>
</dbReference>
<dbReference type="GO" id="GO:0051536">
    <property type="term" value="F:iron-sulfur cluster binding"/>
    <property type="evidence" value="ECO:0007669"/>
    <property type="project" value="UniProtKB-KW"/>
</dbReference>
<dbReference type="GO" id="GO:0046872">
    <property type="term" value="F:metal ion binding"/>
    <property type="evidence" value="ECO:0007669"/>
    <property type="project" value="UniProtKB-KW"/>
</dbReference>
<dbReference type="GO" id="GO:0016989">
    <property type="term" value="F:sigma factor antagonist activity"/>
    <property type="evidence" value="ECO:0000314"/>
    <property type="project" value="MTBBASE"/>
</dbReference>
<dbReference type="GO" id="GO:0009408">
    <property type="term" value="P:response to heat"/>
    <property type="evidence" value="ECO:0000314"/>
    <property type="project" value="MTBBASE"/>
</dbReference>
<dbReference type="GO" id="GO:0006979">
    <property type="term" value="P:response to oxidative stress"/>
    <property type="evidence" value="ECO:0000314"/>
    <property type="project" value="MTBBASE"/>
</dbReference>
<dbReference type="InterPro" id="IPR024020">
    <property type="entry name" value="Anit_sigma_mycothiol_RsrA"/>
</dbReference>
<dbReference type="InterPro" id="IPR027383">
    <property type="entry name" value="Znf_put"/>
</dbReference>
<dbReference type="NCBIfam" id="TIGR03988">
    <property type="entry name" value="antisig_RsrA"/>
    <property type="match status" value="1"/>
</dbReference>
<dbReference type="Pfam" id="PF13490">
    <property type="entry name" value="zf-HC2"/>
    <property type="match status" value="1"/>
</dbReference>
<proteinExistence type="evidence at protein level"/>
<name>RSHA_MYCTU</name>
<evidence type="ECO:0000255" key="1"/>
<evidence type="ECO:0000269" key="2">
    <source>
    </source>
</evidence>
<evidence type="ECO:0000269" key="3">
    <source>
    </source>
</evidence>
<evidence type="ECO:0000269" key="4">
    <source>
    </source>
</evidence>
<evidence type="ECO:0000269" key="5">
    <source>
    </source>
</evidence>
<evidence type="ECO:0000305" key="6"/>
<organism>
    <name type="scientific">Mycobacterium tuberculosis (strain ATCC 25618 / H37Rv)</name>
    <dbReference type="NCBI Taxonomy" id="83332"/>
    <lineage>
        <taxon>Bacteria</taxon>
        <taxon>Bacillati</taxon>
        <taxon>Actinomycetota</taxon>
        <taxon>Actinomycetes</taxon>
        <taxon>Mycobacteriales</taxon>
        <taxon>Mycobacteriaceae</taxon>
        <taxon>Mycobacterium</taxon>
        <taxon>Mycobacterium tuberculosis complex</taxon>
    </lineage>
</organism>
<keyword id="KW-0903">Direct protein sequencing</keyword>
<keyword id="KW-0408">Iron</keyword>
<keyword id="KW-0411">Iron-sulfur</keyword>
<keyword id="KW-0479">Metal-binding</keyword>
<keyword id="KW-0597">Phosphoprotein</keyword>
<keyword id="KW-1185">Reference proteome</keyword>
<keyword id="KW-0346">Stress response</keyword>
<keyword id="KW-0804">Transcription</keyword>
<keyword id="KW-0805">Transcription regulation</keyword>
<reference key="1">
    <citation type="journal article" date="1998" name="Nature">
        <title>Deciphering the biology of Mycobacterium tuberculosis from the complete genome sequence.</title>
        <authorList>
            <person name="Cole S.T."/>
            <person name="Brosch R."/>
            <person name="Parkhill J."/>
            <person name="Garnier T."/>
            <person name="Churcher C.M."/>
            <person name="Harris D.E."/>
            <person name="Gordon S.V."/>
            <person name="Eiglmeier K."/>
            <person name="Gas S."/>
            <person name="Barry C.E. III"/>
            <person name="Tekaia F."/>
            <person name="Badcock K."/>
            <person name="Basham D."/>
            <person name="Brown D."/>
            <person name="Chillingworth T."/>
            <person name="Connor R."/>
            <person name="Davies R.M."/>
            <person name="Devlin K."/>
            <person name="Feltwell T."/>
            <person name="Gentles S."/>
            <person name="Hamlin N."/>
            <person name="Holroyd S."/>
            <person name="Hornsby T."/>
            <person name="Jagels K."/>
            <person name="Krogh A."/>
            <person name="McLean J."/>
            <person name="Moule S."/>
            <person name="Murphy L.D."/>
            <person name="Oliver S."/>
            <person name="Osborne J."/>
            <person name="Quail M.A."/>
            <person name="Rajandream M.A."/>
            <person name="Rogers J."/>
            <person name="Rutter S."/>
            <person name="Seeger K."/>
            <person name="Skelton S."/>
            <person name="Squares S."/>
            <person name="Squares R."/>
            <person name="Sulston J.E."/>
            <person name="Taylor K."/>
            <person name="Whitehead S."/>
            <person name="Barrell B.G."/>
        </authorList>
    </citation>
    <scope>NUCLEOTIDE SEQUENCE [LARGE SCALE GENOMIC DNA]</scope>
    <source>
        <strain>ATCC 25618 / H37Rv</strain>
    </source>
</reference>
<reference key="2">
    <citation type="journal article" date="2012" name="PLoS ONE">
        <title>Interaction of Mycobacterium tuberculosis RshA and SigH is mediated by salt bridges.</title>
        <authorList>
            <person name="Kumar S."/>
            <person name="Badireddy S."/>
            <person name="Pal K."/>
            <person name="Sharma S."/>
            <person name="Arora C."/>
            <person name="Garg S.K."/>
            <person name="Alam M.S."/>
            <person name="Agrawal P."/>
            <person name="Anand G.S."/>
            <person name="Swaminathan K."/>
        </authorList>
    </citation>
    <scope>PROTEIN SEQUENCE OF 1-89</scope>
    <scope>COFACTOR</scope>
    <scope>INTERACTION WITH SIGH</scope>
    <source>
        <strain>ATCC 25618 / H37Rv</strain>
    </source>
</reference>
<reference key="3">
    <citation type="journal article" date="2002" name="Microbiology">
        <title>Re-annotation of the genome sequence of Mycobacterium tuberculosis H37Rv.</title>
        <authorList>
            <person name="Camus J.-C."/>
            <person name="Pryor M.J."/>
            <person name="Medigue C."/>
            <person name="Cole S.T."/>
        </authorList>
    </citation>
    <scope>IDENTIFICATION</scope>
    <source>
        <strain>ATCC 25618 / H37Rv</strain>
    </source>
</reference>
<reference key="4">
    <citation type="journal article" date="2003" name="Mol. Microbiol.">
        <title>RshA, an anti-sigma factor that regulates the activity of the mycobacterial stress response sigma factor SigH.</title>
        <authorList>
            <person name="Song T."/>
            <person name="Dove S.L."/>
            <person name="Lee K.H."/>
            <person name="Husson R.N."/>
        </authorList>
    </citation>
    <scope>FUNCTION AS AN ANTI-SIGMA FACTOR</scope>
    <scope>INTERACTION WITH SIGH</scope>
    <scope>INDUCTION</scope>
</reference>
<reference key="5">
    <citation type="journal article" date="2006" name="Biochem. Biophys. Res. Commun.">
        <title>RshA mimetic peptides inhibiting the transcription driven by a Mycobacterium tuberculosis sigma factor SigH.</title>
        <authorList>
            <person name="Jeong E.H."/>
            <person name="Son Y.M."/>
            <person name="Hah Y.S."/>
            <person name="Choi Y.J."/>
            <person name="Lee K.H."/>
            <person name="Song T."/>
            <person name="Kim D.R."/>
        </authorList>
    </citation>
    <scope>FUNCTION AS AN ANTI-SIGMA FACTOR</scope>
    <scope>BINDING AFFINITY</scope>
    <scope>SUBUNIT</scope>
</reference>
<reference key="6">
    <citation type="journal article" date="2008" name="Proc. Natl. Acad. Sci. U.S.A.">
        <title>Regulation of the SigH stress response regulon by an essential protein kinase in Mycobacterium tuberculosis.</title>
        <authorList>
            <person name="Park S.T."/>
            <person name="Kang C.M."/>
            <person name="Husson R.N."/>
        </authorList>
    </citation>
    <scope>PHOSPHORYLATION AT THR-94</scope>
    <scope>INTERACTION WITH SIGH</scope>
    <scope>REGULATION</scope>
    <scope>MUTAGENESIS OF THR-94</scope>
    <source>
        <strain>ATCC 25618 / H37Rv</strain>
    </source>
</reference>
<reference key="7">
    <citation type="journal article" date="2011" name="Mol. Cell. Proteomics">
        <title>Proteogenomic analysis of Mycobacterium tuberculosis by high resolution mass spectrometry.</title>
        <authorList>
            <person name="Kelkar D.S."/>
            <person name="Kumar D."/>
            <person name="Kumar P."/>
            <person name="Balakrishnan L."/>
            <person name="Muthusamy B."/>
            <person name="Yadav A.K."/>
            <person name="Shrivastava P."/>
            <person name="Marimuthu A."/>
            <person name="Anand S."/>
            <person name="Sundaram H."/>
            <person name="Kingsbury R."/>
            <person name="Harsha H.C."/>
            <person name="Nair B."/>
            <person name="Prasad T.S."/>
            <person name="Chauhan D.S."/>
            <person name="Katoch K."/>
            <person name="Katoch V.M."/>
            <person name="Kumar P."/>
            <person name="Chaerkady R."/>
            <person name="Ramachandran S."/>
            <person name="Dash D."/>
            <person name="Pandey A."/>
        </authorList>
    </citation>
    <scope>IDENTIFICATION BY MASS SPECTROMETRY [LARGE SCALE ANALYSIS]</scope>
    <source>
        <strain>ATCC 25618 / H37Rv</strain>
    </source>
</reference>
<feature type="chain" id="PRO_0000423650" description="Anti-sigma factor RshA">
    <location>
        <begin position="1"/>
        <end position="101"/>
    </location>
</feature>
<feature type="region of interest" description="Inhibits SigH sigma factor activity">
    <location>
        <begin position="9"/>
        <end position="15"/>
    </location>
</feature>
<feature type="region of interest" description="Inhibits SigH sigma factor activity">
    <location>
        <begin position="28"/>
        <end position="34"/>
    </location>
</feature>
<feature type="region of interest" description="Inhibits SigH sigma factor activity">
    <location>
        <begin position="38"/>
        <end position="44"/>
    </location>
</feature>
<feature type="binding site" evidence="1">
    <location>
        <position position="23"/>
    </location>
    <ligand>
        <name>iron-sulfur cluster</name>
        <dbReference type="ChEBI" id="CHEBI:30408"/>
    </ligand>
</feature>
<feature type="binding site" evidence="1">
    <location>
        <position position="49"/>
    </location>
    <ligand>
        <name>iron-sulfur cluster</name>
        <dbReference type="ChEBI" id="CHEBI:30408"/>
    </ligand>
</feature>
<feature type="binding site" evidence="6">
    <location>
        <position position="53"/>
    </location>
    <ligand>
        <name>iron-sulfur cluster</name>
        <dbReference type="ChEBI" id="CHEBI:30408"/>
    </ligand>
</feature>
<feature type="binding site" evidence="6">
    <location>
        <position position="56"/>
    </location>
    <ligand>
        <name>iron-sulfur cluster</name>
        <dbReference type="ChEBI" id="CHEBI:30408"/>
    </ligand>
</feature>
<feature type="modified residue" description="Phosphothreonine" evidence="4">
    <location>
        <position position="94"/>
    </location>
</feature>
<feature type="mutagenesis site" description="No in vitro phosphorylation by PknB." evidence="4">
    <original>T</original>
    <variation>A</variation>
    <location>
        <position position="94"/>
    </location>
</feature>
<sequence>MSENCGPTDAHADHDDSHGGMGCAEVIAEVWTLLDGECTPETRERLRRHLEACPGCLRHYGLEERIKALIGTKCRGDRAPEGLRERLRLEIRRTTIIRGGP</sequence>
<comment type="function">
    <text evidence="2 3">An redox-regulated anti-sigma factor for extracytoplasmic function (ECF) sigma factor SigH. ECF sigma factors are held in an inactive form by a cognate anti-sigma factor. RshA and some peptides derived from it inhibit the sigma factor activity of SigH. Probably releases SigH during oxidative stress.</text>
</comment>
<comment type="cofactor">
    <cofactor evidence="5 6">
        <name>iron-sulfur cluster</name>
        <dbReference type="ChEBI" id="CHEBI:30408"/>
    </cofactor>
    <text evidence="5 6">Binds 1 iron-sulfur cluster per subunit. As the iron-sulfur cluster is unstable, it is not clear from the contradictory experimental evidence whether it is 2Fe-2S, 4Fe-4S or something intermediate. Nor is it clear which other residues besides Cys-53 and Cys-56 are involved in metal binding (PubMed:22937074).</text>
</comment>
<comment type="subunit">
    <text evidence="2 3 4 5">Interacts (affinity=15 nM) 1:1 with cognate sigma factor SigH under reducing conditions; the complex is disrupted under oxiding conditions or as temperatures rise. Binding inhibits the interaction of SigH with the RNA polymerase catalytic core.</text>
</comment>
<comment type="induction">
    <text evidence="2">By SigH, part of the sigH-rshA operon.</text>
</comment>
<comment type="PTM">
    <text evidence="4">Phosphorylated, probably by PknB. Phosphorylation decreases interaction with SigH, leading to increased SigH-mediated transcription.</text>
</comment>
<comment type="similarity">
    <text evidence="6">Belongs to the zinc-associated anti-sigma factor (ZAS) superfamily.</text>
</comment>
<protein>
    <recommendedName>
        <fullName>Anti-sigma factor RshA</fullName>
    </recommendedName>
    <alternativeName>
        <fullName>Regulator of SigH</fullName>
    </alternativeName>
    <alternativeName>
        <fullName>Sigma-H anti-sigma factor RshA</fullName>
    </alternativeName>
</protein>
<gene>
    <name type="primary">rshA</name>
    <name type="ordered locus">Rv3221A</name>
</gene>